<reference key="1">
    <citation type="submission" date="2002-12" db="EMBL/GenBank/DDBJ databases">
        <title>Complete genome sequence of Vibrio vulnificus CMCP6.</title>
        <authorList>
            <person name="Rhee J.H."/>
            <person name="Kim S.Y."/>
            <person name="Chung S.S."/>
            <person name="Kim J.J."/>
            <person name="Moon Y.H."/>
            <person name="Jeong H."/>
            <person name="Choy H.E."/>
        </authorList>
    </citation>
    <scope>NUCLEOTIDE SEQUENCE [LARGE SCALE GENOMIC DNA]</scope>
    <source>
        <strain>CMCP6</strain>
    </source>
</reference>
<keyword id="KW-0030">Aminoacyl-tRNA synthetase</keyword>
<keyword id="KW-0067">ATP-binding</keyword>
<keyword id="KW-0963">Cytoplasm</keyword>
<keyword id="KW-0436">Ligase</keyword>
<keyword id="KW-0547">Nucleotide-binding</keyword>
<keyword id="KW-0648">Protein biosynthesis</keyword>
<protein>
    <recommendedName>
        <fullName evidence="1">Leucine--tRNA ligase</fullName>
        <ecNumber evidence="1">6.1.1.4</ecNumber>
    </recommendedName>
    <alternativeName>
        <fullName evidence="1">Leucyl-tRNA synthetase</fullName>
        <shortName evidence="1">LeuRS</shortName>
    </alternativeName>
</protein>
<dbReference type="EC" id="6.1.1.4" evidence="1"/>
<dbReference type="EMBL" id="AE016795">
    <property type="protein sequence ID" value="AAO08806.1"/>
    <property type="molecule type" value="Genomic_DNA"/>
</dbReference>
<dbReference type="RefSeq" id="WP_011078381.1">
    <property type="nucleotide sequence ID" value="NC_004459.3"/>
</dbReference>
<dbReference type="SMR" id="Q8DFE2"/>
<dbReference type="KEGG" id="vvu:VV1_0272"/>
<dbReference type="HOGENOM" id="CLU_004427_0_0_6"/>
<dbReference type="Proteomes" id="UP000002275">
    <property type="component" value="Chromosome 1"/>
</dbReference>
<dbReference type="GO" id="GO:0005829">
    <property type="term" value="C:cytosol"/>
    <property type="evidence" value="ECO:0007669"/>
    <property type="project" value="TreeGrafter"/>
</dbReference>
<dbReference type="GO" id="GO:0002161">
    <property type="term" value="F:aminoacyl-tRNA deacylase activity"/>
    <property type="evidence" value="ECO:0007669"/>
    <property type="project" value="InterPro"/>
</dbReference>
<dbReference type="GO" id="GO:0005524">
    <property type="term" value="F:ATP binding"/>
    <property type="evidence" value="ECO:0007669"/>
    <property type="project" value="UniProtKB-UniRule"/>
</dbReference>
<dbReference type="GO" id="GO:0004823">
    <property type="term" value="F:leucine-tRNA ligase activity"/>
    <property type="evidence" value="ECO:0007669"/>
    <property type="project" value="UniProtKB-UniRule"/>
</dbReference>
<dbReference type="GO" id="GO:0006429">
    <property type="term" value="P:leucyl-tRNA aminoacylation"/>
    <property type="evidence" value="ECO:0007669"/>
    <property type="project" value="UniProtKB-UniRule"/>
</dbReference>
<dbReference type="CDD" id="cd07958">
    <property type="entry name" value="Anticodon_Ia_Leu_BEm"/>
    <property type="match status" value="1"/>
</dbReference>
<dbReference type="CDD" id="cd00812">
    <property type="entry name" value="LeuRS_core"/>
    <property type="match status" value="1"/>
</dbReference>
<dbReference type="FunFam" id="1.10.730.10:FF:000002">
    <property type="entry name" value="Leucine--tRNA ligase"/>
    <property type="match status" value="2"/>
</dbReference>
<dbReference type="FunFam" id="2.20.28.290:FF:000001">
    <property type="entry name" value="Leucine--tRNA ligase"/>
    <property type="match status" value="1"/>
</dbReference>
<dbReference type="FunFam" id="3.10.20.590:FF:000001">
    <property type="entry name" value="Leucine--tRNA ligase"/>
    <property type="match status" value="1"/>
</dbReference>
<dbReference type="FunFam" id="3.40.50.620:FF:000003">
    <property type="entry name" value="Leucine--tRNA ligase"/>
    <property type="match status" value="1"/>
</dbReference>
<dbReference type="FunFam" id="3.40.50.620:FF:000051">
    <property type="entry name" value="Leucine--tRNA ligase"/>
    <property type="match status" value="1"/>
</dbReference>
<dbReference type="FunFam" id="3.90.740.10:FF:000012">
    <property type="entry name" value="Leucine--tRNA ligase"/>
    <property type="match status" value="1"/>
</dbReference>
<dbReference type="Gene3D" id="2.20.28.290">
    <property type="match status" value="1"/>
</dbReference>
<dbReference type="Gene3D" id="3.10.20.590">
    <property type="match status" value="1"/>
</dbReference>
<dbReference type="Gene3D" id="3.40.50.620">
    <property type="entry name" value="HUPs"/>
    <property type="match status" value="2"/>
</dbReference>
<dbReference type="Gene3D" id="1.10.730.10">
    <property type="entry name" value="Isoleucyl-tRNA Synthetase, Domain 1"/>
    <property type="match status" value="1"/>
</dbReference>
<dbReference type="Gene3D" id="3.90.740.10">
    <property type="entry name" value="Valyl/Leucyl/Isoleucyl-tRNA synthetase, editing domain"/>
    <property type="match status" value="1"/>
</dbReference>
<dbReference type="HAMAP" id="MF_00049_B">
    <property type="entry name" value="Leu_tRNA_synth_B"/>
    <property type="match status" value="1"/>
</dbReference>
<dbReference type="InterPro" id="IPR001412">
    <property type="entry name" value="aa-tRNA-synth_I_CS"/>
</dbReference>
<dbReference type="InterPro" id="IPR002300">
    <property type="entry name" value="aa-tRNA-synth_Ia"/>
</dbReference>
<dbReference type="InterPro" id="IPR002302">
    <property type="entry name" value="Leu-tRNA-ligase"/>
</dbReference>
<dbReference type="InterPro" id="IPR025709">
    <property type="entry name" value="Leu_tRNA-synth_edit"/>
</dbReference>
<dbReference type="InterPro" id="IPR013155">
    <property type="entry name" value="M/V/L/I-tRNA-synth_anticd-bd"/>
</dbReference>
<dbReference type="InterPro" id="IPR015413">
    <property type="entry name" value="Methionyl/Leucyl_tRNA_Synth"/>
</dbReference>
<dbReference type="InterPro" id="IPR014729">
    <property type="entry name" value="Rossmann-like_a/b/a_fold"/>
</dbReference>
<dbReference type="InterPro" id="IPR009080">
    <property type="entry name" value="tRNAsynth_Ia_anticodon-bd"/>
</dbReference>
<dbReference type="InterPro" id="IPR009008">
    <property type="entry name" value="Val/Leu/Ile-tRNA-synth_edit"/>
</dbReference>
<dbReference type="NCBIfam" id="TIGR00396">
    <property type="entry name" value="leuS_bact"/>
    <property type="match status" value="1"/>
</dbReference>
<dbReference type="PANTHER" id="PTHR43740:SF2">
    <property type="entry name" value="LEUCINE--TRNA LIGASE, MITOCHONDRIAL"/>
    <property type="match status" value="1"/>
</dbReference>
<dbReference type="PANTHER" id="PTHR43740">
    <property type="entry name" value="LEUCYL-TRNA SYNTHETASE"/>
    <property type="match status" value="1"/>
</dbReference>
<dbReference type="Pfam" id="PF08264">
    <property type="entry name" value="Anticodon_1"/>
    <property type="match status" value="1"/>
</dbReference>
<dbReference type="Pfam" id="PF00133">
    <property type="entry name" value="tRNA-synt_1"/>
    <property type="match status" value="2"/>
</dbReference>
<dbReference type="Pfam" id="PF13603">
    <property type="entry name" value="tRNA-synt_1_2"/>
    <property type="match status" value="1"/>
</dbReference>
<dbReference type="Pfam" id="PF09334">
    <property type="entry name" value="tRNA-synt_1g"/>
    <property type="match status" value="1"/>
</dbReference>
<dbReference type="PRINTS" id="PR00985">
    <property type="entry name" value="TRNASYNTHLEU"/>
</dbReference>
<dbReference type="SUPFAM" id="SSF47323">
    <property type="entry name" value="Anticodon-binding domain of a subclass of class I aminoacyl-tRNA synthetases"/>
    <property type="match status" value="1"/>
</dbReference>
<dbReference type="SUPFAM" id="SSF52374">
    <property type="entry name" value="Nucleotidylyl transferase"/>
    <property type="match status" value="1"/>
</dbReference>
<dbReference type="SUPFAM" id="SSF50677">
    <property type="entry name" value="ValRS/IleRS/LeuRS editing domain"/>
    <property type="match status" value="1"/>
</dbReference>
<dbReference type="PROSITE" id="PS00178">
    <property type="entry name" value="AA_TRNA_LIGASE_I"/>
    <property type="match status" value="1"/>
</dbReference>
<comment type="catalytic activity">
    <reaction evidence="1">
        <text>tRNA(Leu) + L-leucine + ATP = L-leucyl-tRNA(Leu) + AMP + diphosphate</text>
        <dbReference type="Rhea" id="RHEA:11688"/>
        <dbReference type="Rhea" id="RHEA-COMP:9613"/>
        <dbReference type="Rhea" id="RHEA-COMP:9622"/>
        <dbReference type="ChEBI" id="CHEBI:30616"/>
        <dbReference type="ChEBI" id="CHEBI:33019"/>
        <dbReference type="ChEBI" id="CHEBI:57427"/>
        <dbReference type="ChEBI" id="CHEBI:78442"/>
        <dbReference type="ChEBI" id="CHEBI:78494"/>
        <dbReference type="ChEBI" id="CHEBI:456215"/>
        <dbReference type="EC" id="6.1.1.4"/>
    </reaction>
</comment>
<comment type="subcellular location">
    <subcellularLocation>
        <location evidence="1">Cytoplasm</location>
    </subcellularLocation>
</comment>
<comment type="similarity">
    <text evidence="1">Belongs to the class-I aminoacyl-tRNA synthetase family.</text>
</comment>
<name>SYL_VIBVU</name>
<gene>
    <name evidence="1" type="primary">leuS</name>
    <name type="ordered locus">VV1_0272</name>
</gene>
<organism>
    <name type="scientific">Vibrio vulnificus (strain CMCP6)</name>
    <dbReference type="NCBI Taxonomy" id="216895"/>
    <lineage>
        <taxon>Bacteria</taxon>
        <taxon>Pseudomonadati</taxon>
        <taxon>Pseudomonadota</taxon>
        <taxon>Gammaproteobacteria</taxon>
        <taxon>Vibrionales</taxon>
        <taxon>Vibrionaceae</taxon>
        <taxon>Vibrio</taxon>
    </lineage>
</organism>
<feature type="chain" id="PRO_0000152115" description="Leucine--tRNA ligase">
    <location>
        <begin position="1"/>
        <end position="857"/>
    </location>
</feature>
<feature type="short sequence motif" description="'HIGH' region">
    <location>
        <begin position="42"/>
        <end position="52"/>
    </location>
</feature>
<feature type="short sequence motif" description="'KMSKS' region">
    <location>
        <begin position="617"/>
        <end position="621"/>
    </location>
</feature>
<feature type="binding site" evidence="1">
    <location>
        <position position="620"/>
    </location>
    <ligand>
        <name>ATP</name>
        <dbReference type="ChEBI" id="CHEBI:30616"/>
    </ligand>
</feature>
<evidence type="ECO:0000255" key="1">
    <source>
        <dbReference type="HAMAP-Rule" id="MF_00049"/>
    </source>
</evidence>
<accession>Q8DFE2</accession>
<sequence>MQEQYNPQDIEQKVQQHWDNNKTFVVTEDPTKEKFYCLSMFPYPSGRLHMGHVRNYTIGDVVSRFQRLQGKNVMQPIGWDAFGLPAENAAVKNNTAPAPWTYENIEYMKNQLKLLGFGYDWNREFATCTPEYYRWEQEFFTKLYEKGLVYKKTSSVNWCPNDQTVLANEQVEDGCCWRCDTPVEQKEIPQWFIKITEYAQELLDDLDKLEGWPEMVKTMQRNWIGRSEGVELKFEVKGQQDLEVYTTRPDTLMGVTYVGIAAGHPLAKIAAENNPELAAFIEECKNTKVAEAELATMEKKGMATGLTAIHPLNGREVPVYVANFVLMDYGTGAVMAVPAHDQRDFEFATKYGLDIIPVIKPIDGSELDISEAAYTEKGVLFDSGEFDGLEFQAAFDAIAAKLEAEGKGTKTVNFRLRDWGVSRQRYWGAPIPMVTTEDGQVHPVPADQLPVILPEDVVMDGVTSPIKADKEWAKTTFNGEPALRETDTFDTFMESSWYYARYCSPQADDILDPEKANYWLPVDQYIGGIEHACMHLLYSRFFHKLLRDAGYVTSDEPFKQLLCQGMVLADAFYYTNDKGGKEWVSPTEVKVERDGKGRITSAVDNEGRNVEHSGMIKMSKSKNNGIDPQEMVDKYGADTVRLFMMFASPADMTLEWQESGVEGANRFLKRVWKLVNEHTSKGAAEAVDAAALSGDQKALRRDVHKTIAKVTDDVARRQTFNTAIAAVMELMNKLAKAPQESAQDRAILDEALKAVVAMLYPITPHICFEMWTALGQQDIDNASWPTYDEQALVEDEKLIVVQVNGKVRGKITVAADATKEQVEEIGLNEENVSKHLDGVTIRKVIYVPGKLLSIVAN</sequence>
<proteinExistence type="inferred from homology"/>